<evidence type="ECO:0000255" key="1">
    <source>
        <dbReference type="PIRSR" id="PIRSR000149-1"/>
    </source>
</evidence>
<evidence type="ECO:0000255" key="2">
    <source>
        <dbReference type="PIRSR" id="PIRSR000149-2"/>
    </source>
</evidence>
<evidence type="ECO:0000255" key="3">
    <source>
        <dbReference type="PIRSR" id="PIRSR000149-3"/>
    </source>
</evidence>
<evidence type="ECO:0000255" key="4">
    <source>
        <dbReference type="PIRSR" id="PIRSR000149-4"/>
    </source>
</evidence>
<evidence type="ECO:0000255" key="5">
    <source>
        <dbReference type="RuleBase" id="RU361160"/>
    </source>
</evidence>
<evidence type="ECO:0000269" key="6">
    <source>
    </source>
</evidence>
<evidence type="ECO:0000303" key="7">
    <source>
    </source>
</evidence>
<evidence type="ECO:0000305" key="8"/>
<accession>Q2U0J7</accession>
<keyword id="KW-0324">Glycolysis</keyword>
<keyword id="KW-0520">NAD</keyword>
<keyword id="KW-0547">Nucleotide-binding</keyword>
<keyword id="KW-0560">Oxidoreductase</keyword>
<keyword id="KW-1185">Reference proteome</keyword>
<comment type="function">
    <text evidence="6">Glyceraldehyde-3-phosphate dehydrogenase; part of the gene cluster that mediates the biosynthesis of heptelidic acid (HA), a sesquiterpene lactone that acts as an inhibitor of glyceraldehyde-3-phosphatedehydrogenase (GAPDH) and a growth inhibitor of the salt-tolerant lactic acid bacteria in soy sauce brewing (PubMed:30466366). The GAPDPH hepG/gdpB shows much higher resistance to HA than the GAPDH gpdA located outside of the cluster, but it does not seem to act in self-resistance (PubMed:30466366).</text>
</comment>
<comment type="catalytic activity">
    <reaction evidence="6">
        <text>D-glyceraldehyde 3-phosphate + phosphate + NAD(+) = (2R)-3-phospho-glyceroyl phosphate + NADH + H(+)</text>
        <dbReference type="Rhea" id="RHEA:10300"/>
        <dbReference type="ChEBI" id="CHEBI:15378"/>
        <dbReference type="ChEBI" id="CHEBI:43474"/>
        <dbReference type="ChEBI" id="CHEBI:57540"/>
        <dbReference type="ChEBI" id="CHEBI:57604"/>
        <dbReference type="ChEBI" id="CHEBI:57945"/>
        <dbReference type="ChEBI" id="CHEBI:59776"/>
        <dbReference type="EC" id="1.2.1.12"/>
    </reaction>
    <physiologicalReaction direction="left-to-right" evidence="6">
        <dbReference type="Rhea" id="RHEA:10301"/>
    </physiologicalReaction>
</comment>
<comment type="biophysicochemical properties">
    <kinetics>
        <KM evidence="6">0.28 mM for glyceraldehyde-3-phosphate (GAP)</KM>
    </kinetics>
</comment>
<comment type="pathway">
    <text evidence="5">Carbohydrate degradation; glycolysis; pyruvate from D-glyceraldehyde 3-phosphate: step 1/5.</text>
</comment>
<comment type="subunit">
    <text evidence="5">Homotetramer.</text>
</comment>
<comment type="disruption phenotype">
    <text evidence="6">Does not affect the biosynthesis of heptelidic acid.</text>
</comment>
<comment type="similarity">
    <text evidence="8">Belongs to the glyceraldehyde-3-phosphate dehydrogenase family.</text>
</comment>
<gene>
    <name evidence="7" type="primary">hepG</name>
    <name evidence="7" type="synonym">gpdB</name>
    <name type="ORF">AO090011000414</name>
</gene>
<dbReference type="EC" id="1.2.1.12" evidence="6"/>
<dbReference type="EMBL" id="BA000055">
    <property type="protein sequence ID" value="BAE64918.1"/>
    <property type="molecule type" value="Genomic_DNA"/>
</dbReference>
<dbReference type="RefSeq" id="XP_001826051.1">
    <property type="nucleotide sequence ID" value="XM_001825999.2"/>
</dbReference>
<dbReference type="SMR" id="Q2U0J7"/>
<dbReference type="STRING" id="510516.Q2U0J7"/>
<dbReference type="EnsemblFungi" id="BAE64918">
    <property type="protein sequence ID" value="BAE64918"/>
    <property type="gene ID" value="AO090011000414"/>
</dbReference>
<dbReference type="GeneID" id="5998154"/>
<dbReference type="KEGG" id="aor:AO090011000414"/>
<dbReference type="VEuPathDB" id="FungiDB:AO090011000414"/>
<dbReference type="HOGENOM" id="CLU_030140_0_3_1"/>
<dbReference type="OMA" id="TCQMIRL"/>
<dbReference type="OrthoDB" id="15512at5052"/>
<dbReference type="UniPathway" id="UPA00109">
    <property type="reaction ID" value="UER00184"/>
</dbReference>
<dbReference type="Proteomes" id="UP000006564">
    <property type="component" value="Chromosome 7"/>
</dbReference>
<dbReference type="GO" id="GO:0005829">
    <property type="term" value="C:cytosol"/>
    <property type="evidence" value="ECO:0007669"/>
    <property type="project" value="TreeGrafter"/>
</dbReference>
<dbReference type="GO" id="GO:0004365">
    <property type="term" value="F:glyceraldehyde-3-phosphate dehydrogenase (NAD+) (phosphorylating) activity"/>
    <property type="evidence" value="ECO:0007669"/>
    <property type="project" value="UniProtKB-EC"/>
</dbReference>
<dbReference type="GO" id="GO:0051287">
    <property type="term" value="F:NAD binding"/>
    <property type="evidence" value="ECO:0007669"/>
    <property type="project" value="InterPro"/>
</dbReference>
<dbReference type="GO" id="GO:0050661">
    <property type="term" value="F:NADP binding"/>
    <property type="evidence" value="ECO:0007669"/>
    <property type="project" value="InterPro"/>
</dbReference>
<dbReference type="GO" id="GO:0006006">
    <property type="term" value="P:glucose metabolic process"/>
    <property type="evidence" value="ECO:0007669"/>
    <property type="project" value="InterPro"/>
</dbReference>
<dbReference type="GO" id="GO:0006096">
    <property type="term" value="P:glycolytic process"/>
    <property type="evidence" value="ECO:0007669"/>
    <property type="project" value="UniProtKB-UniPathway"/>
</dbReference>
<dbReference type="CDD" id="cd18126">
    <property type="entry name" value="GAPDH_I_C"/>
    <property type="match status" value="1"/>
</dbReference>
<dbReference type="CDD" id="cd05214">
    <property type="entry name" value="GAPDH_I_N"/>
    <property type="match status" value="1"/>
</dbReference>
<dbReference type="FunFam" id="3.30.360.10:FF:000001">
    <property type="entry name" value="Glyceraldehyde-3-phosphate dehydrogenase"/>
    <property type="match status" value="1"/>
</dbReference>
<dbReference type="FunFam" id="3.40.50.720:FF:000020">
    <property type="entry name" value="Glyceraldehyde-3-phosphate dehydrogenase"/>
    <property type="match status" value="1"/>
</dbReference>
<dbReference type="Gene3D" id="3.30.360.10">
    <property type="entry name" value="Dihydrodipicolinate Reductase, domain 2"/>
    <property type="match status" value="1"/>
</dbReference>
<dbReference type="Gene3D" id="3.40.50.720">
    <property type="entry name" value="NAD(P)-binding Rossmann-like Domain"/>
    <property type="match status" value="1"/>
</dbReference>
<dbReference type="InterPro" id="IPR020831">
    <property type="entry name" value="GlycerAld/Erythrose_P_DH"/>
</dbReference>
<dbReference type="InterPro" id="IPR020830">
    <property type="entry name" value="GlycerAld_3-P_DH_AS"/>
</dbReference>
<dbReference type="InterPro" id="IPR020829">
    <property type="entry name" value="GlycerAld_3-P_DH_cat"/>
</dbReference>
<dbReference type="InterPro" id="IPR020828">
    <property type="entry name" value="GlycerAld_3-P_DH_NAD(P)-bd"/>
</dbReference>
<dbReference type="InterPro" id="IPR006424">
    <property type="entry name" value="Glyceraldehyde-3-P_DH_1"/>
</dbReference>
<dbReference type="InterPro" id="IPR036291">
    <property type="entry name" value="NAD(P)-bd_dom_sf"/>
</dbReference>
<dbReference type="NCBIfam" id="TIGR01534">
    <property type="entry name" value="GAPDH-I"/>
    <property type="match status" value="1"/>
</dbReference>
<dbReference type="PANTHER" id="PTHR10836">
    <property type="entry name" value="GLYCERALDEHYDE 3-PHOSPHATE DEHYDROGENASE"/>
    <property type="match status" value="1"/>
</dbReference>
<dbReference type="PANTHER" id="PTHR10836:SF76">
    <property type="entry name" value="GLYCERALDEHYDE-3-PHOSPHATE DEHYDROGENASE-RELATED"/>
    <property type="match status" value="1"/>
</dbReference>
<dbReference type="Pfam" id="PF02800">
    <property type="entry name" value="Gp_dh_C"/>
    <property type="match status" value="1"/>
</dbReference>
<dbReference type="Pfam" id="PF00044">
    <property type="entry name" value="Gp_dh_N"/>
    <property type="match status" value="1"/>
</dbReference>
<dbReference type="PIRSF" id="PIRSF000149">
    <property type="entry name" value="GAP_DH"/>
    <property type="match status" value="1"/>
</dbReference>
<dbReference type="PRINTS" id="PR00078">
    <property type="entry name" value="G3PDHDRGNASE"/>
</dbReference>
<dbReference type="SMART" id="SM00846">
    <property type="entry name" value="Gp_dh_N"/>
    <property type="match status" value="1"/>
</dbReference>
<dbReference type="SUPFAM" id="SSF55347">
    <property type="entry name" value="Glyceraldehyde-3-phosphate dehydrogenase-like, C-terminal domain"/>
    <property type="match status" value="1"/>
</dbReference>
<dbReference type="SUPFAM" id="SSF51735">
    <property type="entry name" value="NAD(P)-binding Rossmann-fold domains"/>
    <property type="match status" value="1"/>
</dbReference>
<dbReference type="PROSITE" id="PS00071">
    <property type="entry name" value="GAPDH"/>
    <property type="match status" value="1"/>
</dbReference>
<proteinExistence type="evidence at protein level"/>
<sequence>MTAKVGINGFGRIGRIVFRNSFSHENTEVVMVNDPFIEVQYAAYMLKYDSTHGNFEYDVHIDGDSIVVNGKKVKFYAEKDPAKIPWKDAGAEYIIESTGVFTTVEKASAHLQGGAKKVIISAPSADAPMYVMGVNEKTYAGADVVSNASCTTNCLAPLTKVLHERFGVVEGLMTAVHAYTATQKLVDAPSKKDWRGGRAAAQNLIPSSTGAAKAVGKVIPELQGKVTGMSIRVPTSNVSVVDLTCRLEKGASYEEIITAIKEAAQGELKGILDYTEDDVVSSDMKGNPHSSIVDIKAGISLNPNFLKIVSWYDNEWGYSRRVLDLTAYIASVGK</sequence>
<reference key="1">
    <citation type="journal article" date="2005" name="Nature">
        <title>Genome sequencing and analysis of Aspergillus oryzae.</title>
        <authorList>
            <person name="Machida M."/>
            <person name="Asai K."/>
            <person name="Sano M."/>
            <person name="Tanaka T."/>
            <person name="Kumagai T."/>
            <person name="Terai G."/>
            <person name="Kusumoto K."/>
            <person name="Arima T."/>
            <person name="Akita O."/>
            <person name="Kashiwagi Y."/>
            <person name="Abe K."/>
            <person name="Gomi K."/>
            <person name="Horiuchi H."/>
            <person name="Kitamoto K."/>
            <person name="Kobayashi T."/>
            <person name="Takeuchi M."/>
            <person name="Denning D.W."/>
            <person name="Galagan J.E."/>
            <person name="Nierman W.C."/>
            <person name="Yu J."/>
            <person name="Archer D.B."/>
            <person name="Bennett J.W."/>
            <person name="Bhatnagar D."/>
            <person name="Cleveland T.E."/>
            <person name="Fedorova N.D."/>
            <person name="Gotoh O."/>
            <person name="Horikawa H."/>
            <person name="Hosoyama A."/>
            <person name="Ichinomiya M."/>
            <person name="Igarashi R."/>
            <person name="Iwashita K."/>
            <person name="Juvvadi P.R."/>
            <person name="Kato M."/>
            <person name="Kato Y."/>
            <person name="Kin T."/>
            <person name="Kokubun A."/>
            <person name="Maeda H."/>
            <person name="Maeyama N."/>
            <person name="Maruyama J."/>
            <person name="Nagasaki H."/>
            <person name="Nakajima T."/>
            <person name="Oda K."/>
            <person name="Okada K."/>
            <person name="Paulsen I."/>
            <person name="Sakamoto K."/>
            <person name="Sawano T."/>
            <person name="Takahashi M."/>
            <person name="Takase K."/>
            <person name="Terabayashi Y."/>
            <person name="Wortman J.R."/>
            <person name="Yamada O."/>
            <person name="Yamagata Y."/>
            <person name="Anazawa H."/>
            <person name="Hata Y."/>
            <person name="Koide Y."/>
            <person name="Komori T."/>
            <person name="Koyama Y."/>
            <person name="Minetoki T."/>
            <person name="Suharnan S."/>
            <person name="Tanaka A."/>
            <person name="Isono K."/>
            <person name="Kuhara S."/>
            <person name="Ogasawara N."/>
            <person name="Kikuchi H."/>
        </authorList>
    </citation>
    <scope>NUCLEOTIDE SEQUENCE [LARGE SCALE GENOMIC DNA]</scope>
    <source>
        <strain>ATCC 42149 / RIB 40</strain>
    </source>
</reference>
<reference key="2">
    <citation type="journal article" date="2019" name="Biosci. Biotechnol. Biochem.">
        <title>Identification of a gene cluster for biosynthesis of the sesquiterpene antibiotic, heptelidic acid, in Aspergillus oryzae.</title>
        <authorList>
            <person name="Shinohara Y."/>
            <person name="Nishimura I."/>
            <person name="Koyama Y."/>
        </authorList>
    </citation>
    <scope>FUNCTION</scope>
    <scope>DISRUPTION PHENOTYPE</scope>
    <scope>CATALYTIC ACTIVITY</scope>
    <scope>BIOPHYSICOCHEMICAL PROPERTIES</scope>
</reference>
<feature type="chain" id="PRO_0000450834" description="Glyceraldehyde-3-phosphate dehydrogenase B">
    <location>
        <begin position="1"/>
        <end position="334"/>
    </location>
</feature>
<feature type="active site" description="Nucleophile" evidence="1">
    <location>
        <position position="150"/>
    </location>
</feature>
<feature type="binding site" evidence="3">
    <location>
        <begin position="12"/>
        <end position="13"/>
    </location>
    <ligand>
        <name>NAD(+)</name>
        <dbReference type="ChEBI" id="CHEBI:57540"/>
    </ligand>
</feature>
<feature type="binding site" evidence="3">
    <location>
        <position position="34"/>
    </location>
    <ligand>
        <name>NAD(+)</name>
        <dbReference type="ChEBI" id="CHEBI:57540"/>
    </ligand>
</feature>
<feature type="binding site" evidence="3">
    <location>
        <position position="121"/>
    </location>
    <ligand>
        <name>NAD(+)</name>
        <dbReference type="ChEBI" id="CHEBI:57540"/>
    </ligand>
</feature>
<feature type="binding site" evidence="2">
    <location>
        <begin position="149"/>
        <end position="151"/>
    </location>
    <ligand>
        <name>D-glyceraldehyde 3-phosphate</name>
        <dbReference type="ChEBI" id="CHEBI:59776"/>
    </ligand>
</feature>
<feature type="binding site" evidence="2">
    <location>
        <position position="180"/>
    </location>
    <ligand>
        <name>D-glyceraldehyde 3-phosphate</name>
        <dbReference type="ChEBI" id="CHEBI:59776"/>
    </ligand>
</feature>
<feature type="binding site" evidence="2">
    <location>
        <begin position="209"/>
        <end position="210"/>
    </location>
    <ligand>
        <name>D-glyceraldehyde 3-phosphate</name>
        <dbReference type="ChEBI" id="CHEBI:59776"/>
    </ligand>
</feature>
<feature type="binding site" evidence="2">
    <location>
        <position position="232"/>
    </location>
    <ligand>
        <name>D-glyceraldehyde 3-phosphate</name>
        <dbReference type="ChEBI" id="CHEBI:59776"/>
    </ligand>
</feature>
<feature type="binding site" evidence="3">
    <location>
        <position position="314"/>
    </location>
    <ligand>
        <name>NAD(+)</name>
        <dbReference type="ChEBI" id="CHEBI:57540"/>
    </ligand>
</feature>
<feature type="site" description="Activates thiol group during catalysis" evidence="4">
    <location>
        <position position="177"/>
    </location>
</feature>
<name>HEPG_ASPOR</name>
<protein>
    <recommendedName>
        <fullName evidence="7">Glyceraldehyde-3-phosphate dehydrogenase B</fullName>
        <shortName evidence="7">GAPDH</shortName>
        <ecNumber evidence="6">1.2.1.12</ecNumber>
    </recommendedName>
    <alternativeName>
        <fullName evidence="7">Heptelidic acid biosynthesis cluster protein G</fullName>
    </alternativeName>
</protein>
<organism>
    <name type="scientific">Aspergillus oryzae (strain ATCC 42149 / RIB 40)</name>
    <name type="common">Yellow koji mold</name>
    <dbReference type="NCBI Taxonomy" id="510516"/>
    <lineage>
        <taxon>Eukaryota</taxon>
        <taxon>Fungi</taxon>
        <taxon>Dikarya</taxon>
        <taxon>Ascomycota</taxon>
        <taxon>Pezizomycotina</taxon>
        <taxon>Eurotiomycetes</taxon>
        <taxon>Eurotiomycetidae</taxon>
        <taxon>Eurotiales</taxon>
        <taxon>Aspergillaceae</taxon>
        <taxon>Aspergillus</taxon>
        <taxon>Aspergillus subgen. Circumdati</taxon>
    </lineage>
</organism>